<comment type="function">
    <text evidence="1">Required for accurate and efficient protein synthesis under certain stress conditions. May act as a fidelity factor of the translation reaction, by catalyzing a one-codon backward translocation of tRNAs on improperly translocated ribosomes. Back-translocation proceeds from a post-translocation (POST) complex to a pre-translocation (PRE) complex, thus giving elongation factor G a second chance to translocate the tRNAs correctly. Binds to ribosomes in a GTP-dependent manner.</text>
</comment>
<comment type="catalytic activity">
    <reaction evidence="1">
        <text>GTP + H2O = GDP + phosphate + H(+)</text>
        <dbReference type="Rhea" id="RHEA:19669"/>
        <dbReference type="ChEBI" id="CHEBI:15377"/>
        <dbReference type="ChEBI" id="CHEBI:15378"/>
        <dbReference type="ChEBI" id="CHEBI:37565"/>
        <dbReference type="ChEBI" id="CHEBI:43474"/>
        <dbReference type="ChEBI" id="CHEBI:58189"/>
        <dbReference type="EC" id="3.6.5.n1"/>
    </reaction>
</comment>
<comment type="subcellular location">
    <subcellularLocation>
        <location evidence="1">Cell inner membrane</location>
        <topology evidence="1">Peripheral membrane protein</topology>
        <orientation evidence="1">Cytoplasmic side</orientation>
    </subcellularLocation>
</comment>
<comment type="similarity">
    <text evidence="1">Belongs to the TRAFAC class translation factor GTPase superfamily. Classic translation factor GTPase family. LepA subfamily.</text>
</comment>
<gene>
    <name evidence="1" type="primary">lepA</name>
    <name type="ordered locus">lpg1872</name>
</gene>
<protein>
    <recommendedName>
        <fullName evidence="1">Elongation factor 4</fullName>
        <shortName evidence="1">EF-4</shortName>
        <ecNumber evidence="1">3.6.5.n1</ecNumber>
    </recommendedName>
    <alternativeName>
        <fullName evidence="1">Ribosomal back-translocase LepA</fullName>
    </alternativeName>
</protein>
<feature type="chain" id="PRO_0000224771" description="Elongation factor 4">
    <location>
        <begin position="1"/>
        <end position="610"/>
    </location>
</feature>
<feature type="domain" description="tr-type G">
    <location>
        <begin position="14"/>
        <end position="196"/>
    </location>
</feature>
<feature type="binding site" evidence="1">
    <location>
        <begin position="26"/>
        <end position="31"/>
    </location>
    <ligand>
        <name>GTP</name>
        <dbReference type="ChEBI" id="CHEBI:37565"/>
    </ligand>
</feature>
<feature type="binding site" evidence="1">
    <location>
        <begin position="143"/>
        <end position="146"/>
    </location>
    <ligand>
        <name>GTP</name>
        <dbReference type="ChEBI" id="CHEBI:37565"/>
    </ligand>
</feature>
<reference key="1">
    <citation type="journal article" date="2004" name="Science">
        <title>The genomic sequence of the accidental pathogen Legionella pneumophila.</title>
        <authorList>
            <person name="Chien M."/>
            <person name="Morozova I."/>
            <person name="Shi S."/>
            <person name="Sheng H."/>
            <person name="Chen J."/>
            <person name="Gomez S.M."/>
            <person name="Asamani G."/>
            <person name="Hill K."/>
            <person name="Nuara J."/>
            <person name="Feder M."/>
            <person name="Rineer J."/>
            <person name="Greenberg J.J."/>
            <person name="Steshenko V."/>
            <person name="Park S.H."/>
            <person name="Zhao B."/>
            <person name="Teplitskaya E."/>
            <person name="Edwards J.R."/>
            <person name="Pampou S."/>
            <person name="Georghiou A."/>
            <person name="Chou I.-C."/>
            <person name="Iannuccilli W."/>
            <person name="Ulz M.E."/>
            <person name="Kim D.H."/>
            <person name="Geringer-Sameth A."/>
            <person name="Goldsberry C."/>
            <person name="Morozov P."/>
            <person name="Fischer S.G."/>
            <person name="Segal G."/>
            <person name="Qu X."/>
            <person name="Rzhetsky A."/>
            <person name="Zhang P."/>
            <person name="Cayanis E."/>
            <person name="De Jong P.J."/>
            <person name="Ju J."/>
            <person name="Kalachikov S."/>
            <person name="Shuman H.A."/>
            <person name="Russo J.J."/>
        </authorList>
    </citation>
    <scope>NUCLEOTIDE SEQUENCE [LARGE SCALE GENOMIC DNA]</scope>
    <source>
        <strain>Philadelphia 1 / ATCC 33152 / DSM 7513</strain>
    </source>
</reference>
<name>LEPA_LEGPH</name>
<accession>Q5ZUD2</accession>
<organism>
    <name type="scientific">Legionella pneumophila subsp. pneumophila (strain Philadelphia 1 / ATCC 33152 / DSM 7513)</name>
    <dbReference type="NCBI Taxonomy" id="272624"/>
    <lineage>
        <taxon>Bacteria</taxon>
        <taxon>Pseudomonadati</taxon>
        <taxon>Pseudomonadota</taxon>
        <taxon>Gammaproteobacteria</taxon>
        <taxon>Legionellales</taxon>
        <taxon>Legionellaceae</taxon>
        <taxon>Legionella</taxon>
    </lineage>
</organism>
<dbReference type="EC" id="3.6.5.n1" evidence="1"/>
<dbReference type="EMBL" id="AE017354">
    <property type="protein sequence ID" value="AAU27945.1"/>
    <property type="molecule type" value="Genomic_DNA"/>
</dbReference>
<dbReference type="RefSeq" id="WP_010947592.1">
    <property type="nucleotide sequence ID" value="NC_002942.5"/>
</dbReference>
<dbReference type="RefSeq" id="YP_095892.1">
    <property type="nucleotide sequence ID" value="NC_002942.5"/>
</dbReference>
<dbReference type="SMR" id="Q5ZUD2"/>
<dbReference type="STRING" id="272624.lpg1872"/>
<dbReference type="PaxDb" id="272624-lpg1872"/>
<dbReference type="GeneID" id="57035864"/>
<dbReference type="KEGG" id="lpn:lpg1872"/>
<dbReference type="PATRIC" id="fig|272624.6.peg.1957"/>
<dbReference type="eggNOG" id="COG0481">
    <property type="taxonomic scope" value="Bacteria"/>
</dbReference>
<dbReference type="HOGENOM" id="CLU_009995_3_3_6"/>
<dbReference type="OrthoDB" id="9804431at2"/>
<dbReference type="Proteomes" id="UP000000609">
    <property type="component" value="Chromosome"/>
</dbReference>
<dbReference type="GO" id="GO:0005886">
    <property type="term" value="C:plasma membrane"/>
    <property type="evidence" value="ECO:0007669"/>
    <property type="project" value="UniProtKB-SubCell"/>
</dbReference>
<dbReference type="GO" id="GO:0005525">
    <property type="term" value="F:GTP binding"/>
    <property type="evidence" value="ECO:0007669"/>
    <property type="project" value="UniProtKB-UniRule"/>
</dbReference>
<dbReference type="GO" id="GO:0003924">
    <property type="term" value="F:GTPase activity"/>
    <property type="evidence" value="ECO:0007669"/>
    <property type="project" value="UniProtKB-UniRule"/>
</dbReference>
<dbReference type="GO" id="GO:0097216">
    <property type="term" value="F:guanosine tetraphosphate binding"/>
    <property type="evidence" value="ECO:0007669"/>
    <property type="project" value="UniProtKB-ARBA"/>
</dbReference>
<dbReference type="GO" id="GO:0043022">
    <property type="term" value="F:ribosome binding"/>
    <property type="evidence" value="ECO:0007669"/>
    <property type="project" value="UniProtKB-UniRule"/>
</dbReference>
<dbReference type="GO" id="GO:0003746">
    <property type="term" value="F:translation elongation factor activity"/>
    <property type="evidence" value="ECO:0007669"/>
    <property type="project" value="UniProtKB-UniRule"/>
</dbReference>
<dbReference type="GO" id="GO:0045727">
    <property type="term" value="P:positive regulation of translation"/>
    <property type="evidence" value="ECO:0007669"/>
    <property type="project" value="UniProtKB-UniRule"/>
</dbReference>
<dbReference type="CDD" id="cd03699">
    <property type="entry name" value="EF4_II"/>
    <property type="match status" value="1"/>
</dbReference>
<dbReference type="CDD" id="cd16260">
    <property type="entry name" value="EF4_III"/>
    <property type="match status" value="1"/>
</dbReference>
<dbReference type="CDD" id="cd01890">
    <property type="entry name" value="LepA"/>
    <property type="match status" value="1"/>
</dbReference>
<dbReference type="CDD" id="cd03709">
    <property type="entry name" value="lepA_C"/>
    <property type="match status" value="1"/>
</dbReference>
<dbReference type="FunFam" id="3.40.50.300:FF:000078">
    <property type="entry name" value="Elongation factor 4"/>
    <property type="match status" value="1"/>
</dbReference>
<dbReference type="FunFam" id="2.40.30.10:FF:000015">
    <property type="entry name" value="Translation factor GUF1, mitochondrial"/>
    <property type="match status" value="1"/>
</dbReference>
<dbReference type="FunFam" id="3.30.70.240:FF:000007">
    <property type="entry name" value="Translation factor GUF1, mitochondrial"/>
    <property type="match status" value="1"/>
</dbReference>
<dbReference type="FunFam" id="3.30.70.2570:FF:000001">
    <property type="entry name" value="Translation factor GUF1, mitochondrial"/>
    <property type="match status" value="1"/>
</dbReference>
<dbReference type="FunFam" id="3.30.70.870:FF:000004">
    <property type="entry name" value="Translation factor GUF1, mitochondrial"/>
    <property type="match status" value="1"/>
</dbReference>
<dbReference type="Gene3D" id="3.30.70.240">
    <property type="match status" value="1"/>
</dbReference>
<dbReference type="Gene3D" id="3.30.70.2570">
    <property type="entry name" value="Elongation factor 4, C-terminal domain"/>
    <property type="match status" value="1"/>
</dbReference>
<dbReference type="Gene3D" id="3.30.70.870">
    <property type="entry name" value="Elongation Factor G (Translational Gtpase), domain 3"/>
    <property type="match status" value="1"/>
</dbReference>
<dbReference type="Gene3D" id="3.40.50.300">
    <property type="entry name" value="P-loop containing nucleotide triphosphate hydrolases"/>
    <property type="match status" value="1"/>
</dbReference>
<dbReference type="Gene3D" id="2.40.30.10">
    <property type="entry name" value="Translation factors"/>
    <property type="match status" value="1"/>
</dbReference>
<dbReference type="HAMAP" id="MF_00071">
    <property type="entry name" value="LepA"/>
    <property type="match status" value="1"/>
</dbReference>
<dbReference type="InterPro" id="IPR006297">
    <property type="entry name" value="EF-4"/>
</dbReference>
<dbReference type="InterPro" id="IPR035647">
    <property type="entry name" value="EFG_III/V"/>
</dbReference>
<dbReference type="InterPro" id="IPR000640">
    <property type="entry name" value="EFG_V-like"/>
</dbReference>
<dbReference type="InterPro" id="IPR004161">
    <property type="entry name" value="EFTu-like_2"/>
</dbReference>
<dbReference type="InterPro" id="IPR031157">
    <property type="entry name" value="G_TR_CS"/>
</dbReference>
<dbReference type="InterPro" id="IPR038363">
    <property type="entry name" value="LepA_C_sf"/>
</dbReference>
<dbReference type="InterPro" id="IPR013842">
    <property type="entry name" value="LepA_CTD"/>
</dbReference>
<dbReference type="InterPro" id="IPR035654">
    <property type="entry name" value="LepA_IV"/>
</dbReference>
<dbReference type="InterPro" id="IPR027417">
    <property type="entry name" value="P-loop_NTPase"/>
</dbReference>
<dbReference type="InterPro" id="IPR005225">
    <property type="entry name" value="Small_GTP-bd"/>
</dbReference>
<dbReference type="InterPro" id="IPR000795">
    <property type="entry name" value="T_Tr_GTP-bd_dom"/>
</dbReference>
<dbReference type="NCBIfam" id="TIGR01393">
    <property type="entry name" value="lepA"/>
    <property type="match status" value="1"/>
</dbReference>
<dbReference type="NCBIfam" id="TIGR00231">
    <property type="entry name" value="small_GTP"/>
    <property type="match status" value="1"/>
</dbReference>
<dbReference type="PANTHER" id="PTHR43512:SF4">
    <property type="entry name" value="TRANSLATION FACTOR GUF1 HOMOLOG, CHLOROPLASTIC"/>
    <property type="match status" value="1"/>
</dbReference>
<dbReference type="PANTHER" id="PTHR43512">
    <property type="entry name" value="TRANSLATION FACTOR GUF1-RELATED"/>
    <property type="match status" value="1"/>
</dbReference>
<dbReference type="Pfam" id="PF00679">
    <property type="entry name" value="EFG_C"/>
    <property type="match status" value="1"/>
</dbReference>
<dbReference type="Pfam" id="PF00009">
    <property type="entry name" value="GTP_EFTU"/>
    <property type="match status" value="1"/>
</dbReference>
<dbReference type="Pfam" id="PF03144">
    <property type="entry name" value="GTP_EFTU_D2"/>
    <property type="match status" value="1"/>
</dbReference>
<dbReference type="Pfam" id="PF06421">
    <property type="entry name" value="LepA_C"/>
    <property type="match status" value="1"/>
</dbReference>
<dbReference type="PRINTS" id="PR00315">
    <property type="entry name" value="ELONGATNFCT"/>
</dbReference>
<dbReference type="SMART" id="SM00838">
    <property type="entry name" value="EFG_C"/>
    <property type="match status" value="1"/>
</dbReference>
<dbReference type="SUPFAM" id="SSF54980">
    <property type="entry name" value="EF-G C-terminal domain-like"/>
    <property type="match status" value="2"/>
</dbReference>
<dbReference type="SUPFAM" id="SSF52540">
    <property type="entry name" value="P-loop containing nucleoside triphosphate hydrolases"/>
    <property type="match status" value="1"/>
</dbReference>
<dbReference type="PROSITE" id="PS00301">
    <property type="entry name" value="G_TR_1"/>
    <property type="match status" value="1"/>
</dbReference>
<dbReference type="PROSITE" id="PS51722">
    <property type="entry name" value="G_TR_2"/>
    <property type="match status" value="1"/>
</dbReference>
<keyword id="KW-0997">Cell inner membrane</keyword>
<keyword id="KW-1003">Cell membrane</keyword>
<keyword id="KW-0342">GTP-binding</keyword>
<keyword id="KW-0378">Hydrolase</keyword>
<keyword id="KW-0472">Membrane</keyword>
<keyword id="KW-0547">Nucleotide-binding</keyword>
<keyword id="KW-0648">Protein biosynthesis</keyword>
<keyword id="KW-1185">Reference proteome</keyword>
<proteinExistence type="inferred from homology"/>
<sequence length="610" mass="67755">MLFARRLEQLKDLNRIRNFSIIAHIDHGKSTLADRFIQICGGLTEREMSSQVLDSMDIERERGITIKAQCVSLNYTAKDGKTYLLNFIDTPGHVDFSYEVSRSLAACEGAILVVDAAQGVEAQTLAVCYTAIDQSLTVLPVLNKIDLPQAEPERVISEIEDIIGLDAQDAIRVSAKSGLGVNDVLEALVANIPPPKGDVHAPLQALIIDSWFDSYLGVVSLVRIVNGAIRKGDKMRVMSTGRAYEVDQVGIFTPKRTKLDALYAGEVGYVVAGIKEIQGAPVGDTLTLDRNPADKVLPGFQRVKPQVYAGLFPVSSDDFEAFREALAKLSLNDASLFYEPESSEALGFGFRCGFLGMLHMEIIQERLEREYNLDLISTAPTVVYQIVTQKGETLLIDNPSHLPPTPQIKEMYEPIVRANILVPQDYLGPIITLCVERRGVQVSMTYSGRHVSVVYDIPMSEVVSDFFDRLKSVSRGYASLDYNFQRFQIADLVKMDILINSERVDALAVIVHRDSAHSRGKLIAEKMQQLIPRQMFDVAIQAAIGSHIIARQTVKALRKNVTAKCYGGDVTRKRKLLEKQKAGKKRMKQVGHVEIPQEAFMAVFQTDKKK</sequence>
<evidence type="ECO:0000255" key="1">
    <source>
        <dbReference type="HAMAP-Rule" id="MF_00071"/>
    </source>
</evidence>